<comment type="function">
    <text evidence="1">The SPT4-SPT5 complex mediates both activation and inhibition of transcription elongation, and plays a role in pre-mRNA processing. This complex seems to be important for the stability of the RNA polymerase II elongation machinery on the chromatin template but not for the inherent ability of this machinery to translocate down the gene (By similarity).</text>
</comment>
<comment type="subunit">
    <text evidence="1">Component of the SPT4-SPT5 complex. Interacts with RNA polymerase II (By similarity).</text>
</comment>
<comment type="subcellular location">
    <subcellularLocation>
        <location>Nucleus</location>
    </subcellularLocation>
    <subcellularLocation>
        <location evidence="1">Chromosome</location>
        <location evidence="1">Centromere</location>
    </subcellularLocation>
    <text evidence="1">Centromere and heterochromatin.</text>
</comment>
<comment type="similarity">
    <text evidence="3">Belongs to the SPT4 family.</text>
</comment>
<evidence type="ECO:0000250" key="1"/>
<evidence type="ECO:0000255" key="2"/>
<evidence type="ECO:0000305" key="3"/>
<sequence length="112" mass="12538">MSSRSERACMLCGIIQPMKSFIDYGCPNCESLLHYQYNDNKQVQDCTSPSFEGLVALGEDNKGSWVARWLRIDSFTAGLYAVKVNGKLPPSIIAELEEQNVIYRPRDGSAED</sequence>
<accession>Q5AK73</accession>
<accession>A0A1D8PP05</accession>
<protein>
    <recommendedName>
        <fullName>Transcription elongation factor SPT4</fullName>
    </recommendedName>
    <alternativeName>
        <fullName>Chromatin elongation factor SPT4</fullName>
    </alternativeName>
</protein>
<gene>
    <name type="primary">SPT4</name>
    <name type="ordered locus">CAALFM_C504630WA</name>
    <name type="ORF">CaO19.11429</name>
    <name type="ORF">CaO19.3947</name>
</gene>
<organism>
    <name type="scientific">Candida albicans (strain SC5314 / ATCC MYA-2876)</name>
    <name type="common">Yeast</name>
    <dbReference type="NCBI Taxonomy" id="237561"/>
    <lineage>
        <taxon>Eukaryota</taxon>
        <taxon>Fungi</taxon>
        <taxon>Dikarya</taxon>
        <taxon>Ascomycota</taxon>
        <taxon>Saccharomycotina</taxon>
        <taxon>Pichiomycetes</taxon>
        <taxon>Debaryomycetaceae</taxon>
        <taxon>Candida/Lodderomyces clade</taxon>
        <taxon>Candida</taxon>
    </lineage>
</organism>
<keyword id="KW-0137">Centromere</keyword>
<keyword id="KW-0158">Chromosome</keyword>
<keyword id="KW-0479">Metal-binding</keyword>
<keyword id="KW-0507">mRNA processing</keyword>
<keyword id="KW-0539">Nucleus</keyword>
<keyword id="KW-1185">Reference proteome</keyword>
<keyword id="KW-0804">Transcription</keyword>
<keyword id="KW-0862">Zinc</keyword>
<keyword id="KW-0863">Zinc-finger</keyword>
<proteinExistence type="inferred from homology"/>
<dbReference type="EMBL" id="CP017627">
    <property type="protein sequence ID" value="AOW29869.1"/>
    <property type="molecule type" value="Genomic_DNA"/>
</dbReference>
<dbReference type="RefSeq" id="XP_721856.1">
    <property type="nucleotide sequence ID" value="XM_716763.1"/>
</dbReference>
<dbReference type="SMR" id="Q5AK73"/>
<dbReference type="FunCoup" id="Q5AK73">
    <property type="interactions" value="468"/>
</dbReference>
<dbReference type="STRING" id="237561.Q5AK73"/>
<dbReference type="EnsemblFungi" id="C5_04630W_A-T">
    <property type="protein sequence ID" value="C5_04630W_A-T-p1"/>
    <property type="gene ID" value="C5_04630W_A"/>
</dbReference>
<dbReference type="GeneID" id="3636395"/>
<dbReference type="KEGG" id="cal:CAALFM_C504630WA"/>
<dbReference type="CGD" id="CAL0000191909">
    <property type="gene designation" value="SPT4"/>
</dbReference>
<dbReference type="VEuPathDB" id="FungiDB:C5_04630W_A"/>
<dbReference type="eggNOG" id="KOG3490">
    <property type="taxonomic scope" value="Eukaryota"/>
</dbReference>
<dbReference type="HOGENOM" id="CLU_138052_2_1_1"/>
<dbReference type="InParanoid" id="Q5AK73"/>
<dbReference type="OrthoDB" id="248751at2759"/>
<dbReference type="PRO" id="PR:Q5AK73"/>
<dbReference type="Proteomes" id="UP000000559">
    <property type="component" value="Chromosome 5"/>
</dbReference>
<dbReference type="GO" id="GO:0000775">
    <property type="term" value="C:chromosome, centromeric region"/>
    <property type="evidence" value="ECO:0007669"/>
    <property type="project" value="UniProtKB-SubCell"/>
</dbReference>
<dbReference type="GO" id="GO:0032044">
    <property type="term" value="C:DSIF complex"/>
    <property type="evidence" value="ECO:0000318"/>
    <property type="project" value="GO_Central"/>
</dbReference>
<dbReference type="GO" id="GO:0000993">
    <property type="term" value="F:RNA polymerase II complex binding"/>
    <property type="evidence" value="ECO:0000318"/>
    <property type="project" value="GO_Central"/>
</dbReference>
<dbReference type="GO" id="GO:0008270">
    <property type="term" value="F:zinc ion binding"/>
    <property type="evidence" value="ECO:0007669"/>
    <property type="project" value="UniProtKB-KW"/>
</dbReference>
<dbReference type="GO" id="GO:0044180">
    <property type="term" value="P:filamentous growth of a unicellular organism"/>
    <property type="evidence" value="ECO:0000315"/>
    <property type="project" value="CGD"/>
</dbReference>
<dbReference type="GO" id="GO:0006397">
    <property type="term" value="P:mRNA processing"/>
    <property type="evidence" value="ECO:0007669"/>
    <property type="project" value="UniProtKB-KW"/>
</dbReference>
<dbReference type="GO" id="GO:0006355">
    <property type="term" value="P:regulation of DNA-templated transcription"/>
    <property type="evidence" value="ECO:0007669"/>
    <property type="project" value="InterPro"/>
</dbReference>
<dbReference type="GO" id="GO:0006368">
    <property type="term" value="P:transcription elongation by RNA polymerase II"/>
    <property type="evidence" value="ECO:0000318"/>
    <property type="project" value="GO_Central"/>
</dbReference>
<dbReference type="GO" id="GO:0140673">
    <property type="term" value="P:transcription elongation-coupled chromatin remodeling"/>
    <property type="evidence" value="ECO:0007669"/>
    <property type="project" value="InterPro"/>
</dbReference>
<dbReference type="CDD" id="cd07973">
    <property type="entry name" value="Spt4"/>
    <property type="match status" value="1"/>
</dbReference>
<dbReference type="FunFam" id="3.30.40.210:FF:000008">
    <property type="entry name" value="Transcription elongation factor SPT4"/>
    <property type="match status" value="1"/>
</dbReference>
<dbReference type="Gene3D" id="3.30.40.210">
    <property type="match status" value="1"/>
</dbReference>
<dbReference type="InterPro" id="IPR029040">
    <property type="entry name" value="RPABC4/Spt4"/>
</dbReference>
<dbReference type="InterPro" id="IPR009287">
    <property type="entry name" value="Spt4"/>
</dbReference>
<dbReference type="InterPro" id="IPR022800">
    <property type="entry name" value="Spt4/RpoE2_Znf"/>
</dbReference>
<dbReference type="InterPro" id="IPR038510">
    <property type="entry name" value="Spt4_sf"/>
</dbReference>
<dbReference type="PANTHER" id="PTHR12882">
    <property type="entry name" value="SUPPRESSOR OF TY 4"/>
    <property type="match status" value="1"/>
</dbReference>
<dbReference type="PANTHER" id="PTHR12882:SF1">
    <property type="entry name" value="TRANSCRIPTION ELONGATION FACTOR SPT4"/>
    <property type="match status" value="1"/>
</dbReference>
<dbReference type="Pfam" id="PF06093">
    <property type="entry name" value="Spt4"/>
    <property type="match status" value="1"/>
</dbReference>
<dbReference type="PIRSF" id="PIRSF025023">
    <property type="entry name" value="Spt4"/>
    <property type="match status" value="1"/>
</dbReference>
<dbReference type="SMART" id="SM01389">
    <property type="entry name" value="Spt4"/>
    <property type="match status" value="1"/>
</dbReference>
<dbReference type="SUPFAM" id="SSF63393">
    <property type="entry name" value="RNA polymerase subunits"/>
    <property type="match status" value="1"/>
</dbReference>
<feature type="chain" id="PRO_0000238547" description="Transcription elongation factor SPT4">
    <location>
        <begin position="1"/>
        <end position="112"/>
    </location>
</feature>
<feature type="zinc finger region" description="C4-type" evidence="2">
    <location>
        <begin position="9"/>
        <end position="29"/>
    </location>
</feature>
<reference key="1">
    <citation type="journal article" date="2004" name="Proc. Natl. Acad. Sci. U.S.A.">
        <title>The diploid genome sequence of Candida albicans.</title>
        <authorList>
            <person name="Jones T."/>
            <person name="Federspiel N.A."/>
            <person name="Chibana H."/>
            <person name="Dungan J."/>
            <person name="Kalman S."/>
            <person name="Magee B.B."/>
            <person name="Newport G."/>
            <person name="Thorstenson Y.R."/>
            <person name="Agabian N."/>
            <person name="Magee P.T."/>
            <person name="Davis R.W."/>
            <person name="Scherer S."/>
        </authorList>
    </citation>
    <scope>NUCLEOTIDE SEQUENCE [LARGE SCALE GENOMIC DNA]</scope>
    <source>
        <strain>SC5314 / ATCC MYA-2876</strain>
    </source>
</reference>
<reference key="2">
    <citation type="journal article" date="2007" name="Genome Biol.">
        <title>Assembly of the Candida albicans genome into sixteen supercontigs aligned on the eight chromosomes.</title>
        <authorList>
            <person name="van het Hoog M."/>
            <person name="Rast T.J."/>
            <person name="Martchenko M."/>
            <person name="Grindle S."/>
            <person name="Dignard D."/>
            <person name="Hogues H."/>
            <person name="Cuomo C."/>
            <person name="Berriman M."/>
            <person name="Scherer S."/>
            <person name="Magee B.B."/>
            <person name="Whiteway M."/>
            <person name="Chibana H."/>
            <person name="Nantel A."/>
            <person name="Magee P.T."/>
        </authorList>
    </citation>
    <scope>GENOME REANNOTATION</scope>
    <source>
        <strain>SC5314 / ATCC MYA-2876</strain>
    </source>
</reference>
<reference key="3">
    <citation type="journal article" date="2013" name="Genome Biol.">
        <title>Assembly of a phased diploid Candida albicans genome facilitates allele-specific measurements and provides a simple model for repeat and indel structure.</title>
        <authorList>
            <person name="Muzzey D."/>
            <person name="Schwartz K."/>
            <person name="Weissman J.S."/>
            <person name="Sherlock G."/>
        </authorList>
    </citation>
    <scope>NUCLEOTIDE SEQUENCE [LARGE SCALE GENOMIC DNA]</scope>
    <scope>GENOME REANNOTATION</scope>
    <source>
        <strain>SC5314 / ATCC MYA-2876</strain>
    </source>
</reference>
<name>SPT4_CANAL</name>